<organism>
    <name type="scientific">Chlorobium chlorochromatii (strain CaD3)</name>
    <dbReference type="NCBI Taxonomy" id="340177"/>
    <lineage>
        <taxon>Bacteria</taxon>
        <taxon>Pseudomonadati</taxon>
        <taxon>Chlorobiota</taxon>
        <taxon>Chlorobiia</taxon>
        <taxon>Chlorobiales</taxon>
        <taxon>Chlorobiaceae</taxon>
        <taxon>Chlorobium/Pelodictyon group</taxon>
        <taxon>Chlorobium</taxon>
    </lineage>
</organism>
<protein>
    <recommendedName>
        <fullName evidence="1">Probable glycine dehydrogenase (decarboxylating) subunit 2</fullName>
        <ecNumber evidence="1">1.4.4.2</ecNumber>
    </recommendedName>
    <alternativeName>
        <fullName evidence="1">Glycine cleavage system P-protein subunit 2</fullName>
    </alternativeName>
    <alternativeName>
        <fullName evidence="1">Glycine decarboxylase subunit 2</fullName>
    </alternativeName>
    <alternativeName>
        <fullName evidence="1">Glycine dehydrogenase (aminomethyl-transferring) subunit 2</fullName>
    </alternativeName>
</protein>
<keyword id="KW-0560">Oxidoreductase</keyword>
<keyword id="KW-0663">Pyridoxal phosphate</keyword>
<sequence length="481" mass="52539">MKEPLIFDLSRPGRKGYSLSPCDVPEVPLESIIPASLLRKEAVELPEVAENEVVRHFVRLSNLNYHVDKNMYPLGSCTMKYNPKVNDYTCDLSGFSALHPLQPTSTTQGALQLMYELSNMLAEIAGMAGVSLQPAAGAHGELTGILLIKKYHEVRGDKRHKLLVVDSAHGTNPASAALAGYETISVKSNGDGRTDLEDLRSKLDGDVAALMLTNPNTIGLFEKEIVQIAEMVHANGSLLYMDGANMNALLGITRPGDMGFDVMHYNLHKTFAAPHGGGGPGSGPVGVNEKLLPYLPAPLVVKEGDTYRLTSGGDDSIGRMMNFYGNFAVLVRAYTYIRMLGAEGLRRVSENAIINANYLLSKLLERYELPYPKPVMHEFCLSGDKQKKAHGVKTLDIAKRLLDYGFHAPTIYFPLIVSEALMIEPTETESKETLDIFADALLAIAREAEENPDVVKMAPSTTAVKRLDEATASRQLTICCM</sequence>
<proteinExistence type="inferred from homology"/>
<accession>Q3AQ15</accession>
<dbReference type="EC" id="1.4.4.2" evidence="1"/>
<dbReference type="EMBL" id="CP000108">
    <property type="protein sequence ID" value="ABB28910.1"/>
    <property type="molecule type" value="Genomic_DNA"/>
</dbReference>
<dbReference type="SMR" id="Q3AQ15"/>
<dbReference type="STRING" id="340177.Cag_1658"/>
<dbReference type="KEGG" id="cch:Cag_1658"/>
<dbReference type="eggNOG" id="COG1003">
    <property type="taxonomic scope" value="Bacteria"/>
</dbReference>
<dbReference type="HOGENOM" id="CLU_004620_5_0_10"/>
<dbReference type="OrthoDB" id="9801272at2"/>
<dbReference type="GO" id="GO:0005829">
    <property type="term" value="C:cytosol"/>
    <property type="evidence" value="ECO:0007669"/>
    <property type="project" value="TreeGrafter"/>
</dbReference>
<dbReference type="GO" id="GO:0005960">
    <property type="term" value="C:glycine cleavage complex"/>
    <property type="evidence" value="ECO:0007669"/>
    <property type="project" value="TreeGrafter"/>
</dbReference>
<dbReference type="GO" id="GO:0016594">
    <property type="term" value="F:glycine binding"/>
    <property type="evidence" value="ECO:0007669"/>
    <property type="project" value="TreeGrafter"/>
</dbReference>
<dbReference type="GO" id="GO:0004375">
    <property type="term" value="F:glycine dehydrogenase (decarboxylating) activity"/>
    <property type="evidence" value="ECO:0007669"/>
    <property type="project" value="UniProtKB-EC"/>
</dbReference>
<dbReference type="GO" id="GO:0030170">
    <property type="term" value="F:pyridoxal phosphate binding"/>
    <property type="evidence" value="ECO:0007669"/>
    <property type="project" value="TreeGrafter"/>
</dbReference>
<dbReference type="GO" id="GO:0019464">
    <property type="term" value="P:glycine decarboxylation via glycine cleavage system"/>
    <property type="evidence" value="ECO:0007669"/>
    <property type="project" value="UniProtKB-UniRule"/>
</dbReference>
<dbReference type="CDD" id="cd00613">
    <property type="entry name" value="GDC-P"/>
    <property type="match status" value="1"/>
</dbReference>
<dbReference type="FunFam" id="3.40.640.10:FF:000224">
    <property type="entry name" value="Probable glycine dehydrogenase (decarboxylating) subunit 2"/>
    <property type="match status" value="1"/>
</dbReference>
<dbReference type="FunFam" id="3.90.1150.10:FF:000014">
    <property type="entry name" value="Probable glycine dehydrogenase (decarboxylating) subunit 2"/>
    <property type="match status" value="1"/>
</dbReference>
<dbReference type="Gene3D" id="6.20.440.10">
    <property type="match status" value="1"/>
</dbReference>
<dbReference type="Gene3D" id="3.90.1150.10">
    <property type="entry name" value="Aspartate Aminotransferase, domain 1"/>
    <property type="match status" value="1"/>
</dbReference>
<dbReference type="Gene3D" id="3.40.640.10">
    <property type="entry name" value="Type I PLP-dependent aspartate aminotransferase-like (Major domain)"/>
    <property type="match status" value="1"/>
</dbReference>
<dbReference type="HAMAP" id="MF_00713">
    <property type="entry name" value="GcvPB"/>
    <property type="match status" value="1"/>
</dbReference>
<dbReference type="InterPro" id="IPR000192">
    <property type="entry name" value="Aminotrans_V_dom"/>
</dbReference>
<dbReference type="InterPro" id="IPR023012">
    <property type="entry name" value="GcvPB"/>
</dbReference>
<dbReference type="InterPro" id="IPR049316">
    <property type="entry name" value="GDC-P_C"/>
</dbReference>
<dbReference type="InterPro" id="IPR020581">
    <property type="entry name" value="GDC_P"/>
</dbReference>
<dbReference type="InterPro" id="IPR015424">
    <property type="entry name" value="PyrdxlP-dep_Trfase"/>
</dbReference>
<dbReference type="InterPro" id="IPR015421">
    <property type="entry name" value="PyrdxlP-dep_Trfase_major"/>
</dbReference>
<dbReference type="InterPro" id="IPR015422">
    <property type="entry name" value="PyrdxlP-dep_Trfase_small"/>
</dbReference>
<dbReference type="NCBIfam" id="NF003346">
    <property type="entry name" value="PRK04366.1"/>
    <property type="match status" value="1"/>
</dbReference>
<dbReference type="PANTHER" id="PTHR11773:SF1">
    <property type="entry name" value="GLYCINE DEHYDROGENASE (DECARBOXYLATING), MITOCHONDRIAL"/>
    <property type="match status" value="1"/>
</dbReference>
<dbReference type="PANTHER" id="PTHR11773">
    <property type="entry name" value="GLYCINE DEHYDROGENASE, DECARBOXYLATING"/>
    <property type="match status" value="1"/>
</dbReference>
<dbReference type="Pfam" id="PF00266">
    <property type="entry name" value="Aminotran_5"/>
    <property type="match status" value="1"/>
</dbReference>
<dbReference type="Pfam" id="PF21478">
    <property type="entry name" value="GcvP2_C"/>
    <property type="match status" value="1"/>
</dbReference>
<dbReference type="SUPFAM" id="SSF53383">
    <property type="entry name" value="PLP-dependent transferases"/>
    <property type="match status" value="1"/>
</dbReference>
<comment type="function">
    <text evidence="1">The glycine cleavage system catalyzes the degradation of glycine. The P protein binds the alpha-amino group of glycine through its pyridoxal phosphate cofactor; CO(2) is released and the remaining methylamine moiety is then transferred to the lipoamide cofactor of the H protein.</text>
</comment>
<comment type="catalytic activity">
    <reaction evidence="1">
        <text>N(6)-[(R)-lipoyl]-L-lysyl-[glycine-cleavage complex H protein] + glycine + H(+) = N(6)-[(R)-S(8)-aminomethyldihydrolipoyl]-L-lysyl-[glycine-cleavage complex H protein] + CO2</text>
        <dbReference type="Rhea" id="RHEA:24304"/>
        <dbReference type="Rhea" id="RHEA-COMP:10494"/>
        <dbReference type="Rhea" id="RHEA-COMP:10495"/>
        <dbReference type="ChEBI" id="CHEBI:15378"/>
        <dbReference type="ChEBI" id="CHEBI:16526"/>
        <dbReference type="ChEBI" id="CHEBI:57305"/>
        <dbReference type="ChEBI" id="CHEBI:83099"/>
        <dbReference type="ChEBI" id="CHEBI:83143"/>
        <dbReference type="EC" id="1.4.4.2"/>
    </reaction>
</comment>
<comment type="cofactor">
    <cofactor evidence="1">
        <name>pyridoxal 5'-phosphate</name>
        <dbReference type="ChEBI" id="CHEBI:597326"/>
    </cofactor>
</comment>
<comment type="subunit">
    <text evidence="1">The glycine cleavage system is composed of four proteins: P, T, L and H. In this organism, the P 'protein' is a heterodimer of two subunits.</text>
</comment>
<comment type="similarity">
    <text evidence="1">Belongs to the GcvP family. C-terminal subunit subfamily.</text>
</comment>
<reference key="1">
    <citation type="submission" date="2005-08" db="EMBL/GenBank/DDBJ databases">
        <title>Complete sequence of Chlorobium chlorochromatii CaD3.</title>
        <authorList>
            <consortium name="US DOE Joint Genome Institute"/>
            <person name="Copeland A."/>
            <person name="Lucas S."/>
            <person name="Lapidus A."/>
            <person name="Barry K."/>
            <person name="Detter J.C."/>
            <person name="Glavina T."/>
            <person name="Hammon N."/>
            <person name="Israni S."/>
            <person name="Pitluck S."/>
            <person name="Bryant D."/>
            <person name="Schmutz J."/>
            <person name="Larimer F."/>
            <person name="Land M."/>
            <person name="Kyrpides N."/>
            <person name="Ivanova N."/>
            <person name="Richardson P."/>
        </authorList>
    </citation>
    <scope>NUCLEOTIDE SEQUENCE [LARGE SCALE GENOMIC DNA]</scope>
    <source>
        <strain>CaD3</strain>
    </source>
</reference>
<name>GCSPB_CHLCH</name>
<gene>
    <name evidence="1" type="primary">gcvPB</name>
    <name type="ordered locus">Cag_1658</name>
</gene>
<evidence type="ECO:0000255" key="1">
    <source>
        <dbReference type="HAMAP-Rule" id="MF_00713"/>
    </source>
</evidence>
<feature type="chain" id="PRO_1000045689" description="Probable glycine dehydrogenase (decarboxylating) subunit 2">
    <location>
        <begin position="1"/>
        <end position="481"/>
    </location>
</feature>
<feature type="modified residue" description="N6-(pyridoxal phosphate)lysine" evidence="1">
    <location>
        <position position="269"/>
    </location>
</feature>